<protein>
    <recommendedName>
        <fullName evidence="1">Cytoskeleton protein RodZ</fullName>
    </recommendedName>
</protein>
<feature type="chain" id="PRO_0000361834" description="Cytoskeleton protein RodZ">
    <location>
        <begin position="1"/>
        <end position="337"/>
    </location>
</feature>
<feature type="topological domain" description="Cytoplasmic" evidence="1">
    <location>
        <begin position="1"/>
        <end position="111"/>
    </location>
</feature>
<feature type="transmembrane region" description="Helical; Signal-anchor for type II membrane protein" evidence="1">
    <location>
        <begin position="112"/>
        <end position="132"/>
    </location>
</feature>
<feature type="topological domain" description="Periplasmic" evidence="1">
    <location>
        <begin position="133"/>
        <end position="337"/>
    </location>
</feature>
<feature type="domain" description="HTH cro/C1-type" evidence="1">
    <location>
        <begin position="19"/>
        <end position="71"/>
    </location>
</feature>
<feature type="DNA-binding region" description="H-T-H motif" evidence="1">
    <location>
        <begin position="30"/>
        <end position="49"/>
    </location>
</feature>
<feature type="region of interest" description="Disordered" evidence="2">
    <location>
        <begin position="145"/>
        <end position="236"/>
    </location>
</feature>
<feature type="compositionally biased region" description="Polar residues" evidence="2">
    <location>
        <begin position="145"/>
        <end position="167"/>
    </location>
</feature>
<feature type="compositionally biased region" description="Low complexity" evidence="2">
    <location>
        <begin position="168"/>
        <end position="207"/>
    </location>
</feature>
<feature type="compositionally biased region" description="Polar residues" evidence="2">
    <location>
        <begin position="208"/>
        <end position="218"/>
    </location>
</feature>
<feature type="compositionally biased region" description="Low complexity" evidence="2">
    <location>
        <begin position="219"/>
        <end position="236"/>
    </location>
</feature>
<name>RODZ_ECOLC</name>
<comment type="function">
    <text evidence="1">Cytoskeletal protein that is involved in cell-shape control through regulation of the length of the long axis.</text>
</comment>
<comment type="subcellular location">
    <subcellularLocation>
        <location evidence="1">Cell inner membrane</location>
        <topology evidence="1">Single-pass type II membrane protein</topology>
    </subcellularLocation>
    <text evidence="1">Forms helical filaments along the long axis of the cell.</text>
</comment>
<comment type="domain">
    <text evidence="1">The helix-turn-helix (HTH) motif in the cytoplasmic domain of the N-terminus is involved in the formation of spirals to maintain the rigid rod shape. As this protein is anchored in the cytoplasmic membrane, the HTH motif may contribute to protein-protein interactions to form the RodZ helix, which is localized beneath the cytoplasmic membrane. The C-terminal domain may be critical for determination of the rod shape by probably interacting with enzymes required for synthesis of the peptidoglycan layer, including PBPs in the periplasm.</text>
</comment>
<comment type="similarity">
    <text evidence="1">Belongs to the RodZ family.</text>
</comment>
<dbReference type="EMBL" id="CP000946">
    <property type="protein sequence ID" value="ACA76828.1"/>
    <property type="molecule type" value="Genomic_DNA"/>
</dbReference>
<dbReference type="RefSeq" id="WP_001090844.1">
    <property type="nucleotide sequence ID" value="NZ_MTFT01000002.1"/>
</dbReference>
<dbReference type="SMR" id="B1IWE5"/>
<dbReference type="GeneID" id="75172624"/>
<dbReference type="KEGG" id="ecl:EcolC_1161"/>
<dbReference type="HOGENOM" id="CLU_047530_3_1_6"/>
<dbReference type="GO" id="GO:0005886">
    <property type="term" value="C:plasma membrane"/>
    <property type="evidence" value="ECO:0007669"/>
    <property type="project" value="UniProtKB-SubCell"/>
</dbReference>
<dbReference type="GO" id="GO:0003677">
    <property type="term" value="F:DNA binding"/>
    <property type="evidence" value="ECO:0007669"/>
    <property type="project" value="UniProtKB-KW"/>
</dbReference>
<dbReference type="GO" id="GO:0008360">
    <property type="term" value="P:regulation of cell shape"/>
    <property type="evidence" value="ECO:0007669"/>
    <property type="project" value="UniProtKB-UniRule"/>
</dbReference>
<dbReference type="CDD" id="cd00093">
    <property type="entry name" value="HTH_XRE"/>
    <property type="match status" value="1"/>
</dbReference>
<dbReference type="FunFam" id="1.10.260.40:FF:000014">
    <property type="entry name" value="Cytoskeleton protein RodZ"/>
    <property type="match status" value="1"/>
</dbReference>
<dbReference type="Gene3D" id="1.10.260.40">
    <property type="entry name" value="lambda repressor-like DNA-binding domains"/>
    <property type="match status" value="1"/>
</dbReference>
<dbReference type="HAMAP" id="MF_02017">
    <property type="entry name" value="RodZ"/>
    <property type="match status" value="1"/>
</dbReference>
<dbReference type="InterPro" id="IPR050400">
    <property type="entry name" value="Bact_Cytoskel_RodZ"/>
</dbReference>
<dbReference type="InterPro" id="IPR001387">
    <property type="entry name" value="Cro/C1-type_HTH"/>
</dbReference>
<dbReference type="InterPro" id="IPR010982">
    <property type="entry name" value="Lambda_DNA-bd_dom_sf"/>
</dbReference>
<dbReference type="InterPro" id="IPR023690">
    <property type="entry name" value="RodZ"/>
</dbReference>
<dbReference type="InterPro" id="IPR025194">
    <property type="entry name" value="RodZ-like_C"/>
</dbReference>
<dbReference type="NCBIfam" id="NF008109">
    <property type="entry name" value="PRK10856.1"/>
    <property type="match status" value="1"/>
</dbReference>
<dbReference type="PANTHER" id="PTHR34475">
    <property type="match status" value="1"/>
</dbReference>
<dbReference type="PANTHER" id="PTHR34475:SF1">
    <property type="entry name" value="CYTOSKELETON PROTEIN RODZ"/>
    <property type="match status" value="1"/>
</dbReference>
<dbReference type="Pfam" id="PF13413">
    <property type="entry name" value="HTH_25"/>
    <property type="match status" value="1"/>
</dbReference>
<dbReference type="Pfam" id="PF13464">
    <property type="entry name" value="RodZ_C"/>
    <property type="match status" value="1"/>
</dbReference>
<dbReference type="SMART" id="SM00530">
    <property type="entry name" value="HTH_XRE"/>
    <property type="match status" value="1"/>
</dbReference>
<dbReference type="SUPFAM" id="SSF47413">
    <property type="entry name" value="lambda repressor-like DNA-binding domains"/>
    <property type="match status" value="1"/>
</dbReference>
<dbReference type="PROSITE" id="PS50943">
    <property type="entry name" value="HTH_CROC1"/>
    <property type="match status" value="1"/>
</dbReference>
<evidence type="ECO:0000255" key="1">
    <source>
        <dbReference type="HAMAP-Rule" id="MF_02017"/>
    </source>
</evidence>
<evidence type="ECO:0000256" key="2">
    <source>
        <dbReference type="SAM" id="MobiDB-lite"/>
    </source>
</evidence>
<organism>
    <name type="scientific">Escherichia coli (strain ATCC 8739 / DSM 1576 / NBRC 3972 / NCIMB 8545 / WDCM 00012 / Crooks)</name>
    <dbReference type="NCBI Taxonomy" id="481805"/>
    <lineage>
        <taxon>Bacteria</taxon>
        <taxon>Pseudomonadati</taxon>
        <taxon>Pseudomonadota</taxon>
        <taxon>Gammaproteobacteria</taxon>
        <taxon>Enterobacterales</taxon>
        <taxon>Enterobacteriaceae</taxon>
        <taxon>Escherichia</taxon>
    </lineage>
</organism>
<reference key="1">
    <citation type="submission" date="2008-02" db="EMBL/GenBank/DDBJ databases">
        <title>Complete sequence of Escherichia coli C str. ATCC 8739.</title>
        <authorList>
            <person name="Copeland A."/>
            <person name="Lucas S."/>
            <person name="Lapidus A."/>
            <person name="Glavina del Rio T."/>
            <person name="Dalin E."/>
            <person name="Tice H."/>
            <person name="Bruce D."/>
            <person name="Goodwin L."/>
            <person name="Pitluck S."/>
            <person name="Kiss H."/>
            <person name="Brettin T."/>
            <person name="Detter J.C."/>
            <person name="Han C."/>
            <person name="Kuske C.R."/>
            <person name="Schmutz J."/>
            <person name="Larimer F."/>
            <person name="Land M."/>
            <person name="Hauser L."/>
            <person name="Kyrpides N."/>
            <person name="Mikhailova N."/>
            <person name="Ingram L."/>
            <person name="Richardson P."/>
        </authorList>
    </citation>
    <scope>NUCLEOTIDE SEQUENCE [LARGE SCALE GENOMIC DNA]</scope>
    <source>
        <strain>ATCC 8739 / DSM 1576 / NBRC 3972 / NCIMB 8545 / WDCM 00012 / Crooks</strain>
    </source>
</reference>
<keyword id="KW-0997">Cell inner membrane</keyword>
<keyword id="KW-1003">Cell membrane</keyword>
<keyword id="KW-0133">Cell shape</keyword>
<keyword id="KW-0238">DNA-binding</keyword>
<keyword id="KW-0472">Membrane</keyword>
<keyword id="KW-0735">Signal-anchor</keyword>
<keyword id="KW-0812">Transmembrane</keyword>
<keyword id="KW-1133">Transmembrane helix</keyword>
<proteinExistence type="inferred from homology"/>
<gene>
    <name evidence="1" type="primary">rodZ</name>
    <name type="ordered locus">EcolC_1161</name>
</gene>
<accession>B1IWE5</accession>
<sequence>MNTEATHDQNEALTTGARLRNAREQLGLSQQAVAERLCLKVSTVRDIEEDKAPADLASTFLRGYIRSYARLVHIPEEELLPGLEKQAPLRAAKVAPMQSFSLGKRRKKRDGWLMTFTWLVLFVVIGLSGAWWWQDHKAQQEEITTMADQSSAELSSNSEQGQSVPLNTSTTTDPATTSTPPASVDTTATNTQTPAVTAPAPAVDPQQNAVVSPSQANVDTAATPAPTAATTPDGAAPLPTDQAGVTTPVADPNALVMNFTADCWLEVTDATGKKLFSGMQRKDGNLNLTGQAPYKLKIGAPAAVQIQYQGKPVDLSRFIRTNQVARLTLNAEQSPAQ</sequence>